<feature type="chain" id="PRO_0000225804" description="UPF0145 protein BC_1012">
    <location>
        <begin position="1"/>
        <end position="103"/>
    </location>
</feature>
<feature type="strand" evidence="2">
    <location>
        <begin position="5"/>
        <end position="9"/>
    </location>
</feature>
<feature type="strand" evidence="2">
    <location>
        <begin position="16"/>
        <end position="27"/>
    </location>
</feature>
<feature type="helix" evidence="2">
    <location>
        <begin position="29"/>
        <end position="33"/>
    </location>
</feature>
<feature type="helix" evidence="2">
    <location>
        <begin position="37"/>
        <end position="39"/>
    </location>
</feature>
<feature type="strand" evidence="2">
    <location>
        <begin position="40"/>
        <end position="44"/>
    </location>
</feature>
<feature type="turn" evidence="2">
    <location>
        <begin position="45"/>
        <end position="48"/>
    </location>
</feature>
<feature type="strand" evidence="2">
    <location>
        <begin position="49"/>
        <end position="51"/>
    </location>
</feature>
<feature type="helix" evidence="2">
    <location>
        <begin position="55"/>
        <end position="71"/>
    </location>
</feature>
<feature type="strand" evidence="2">
    <location>
        <begin position="75"/>
        <end position="87"/>
    </location>
</feature>
<feature type="helix" evidence="2">
    <location>
        <begin position="88"/>
        <end position="90"/>
    </location>
</feature>
<feature type="strand" evidence="2">
    <location>
        <begin position="91"/>
        <end position="102"/>
    </location>
</feature>
<organism>
    <name type="scientific">Bacillus cereus (strain ATCC 14579 / DSM 31 / CCUG 7414 / JCM 2152 / NBRC 15305 / NCIMB 9373 / NCTC 2599 / NRRL B-3711)</name>
    <dbReference type="NCBI Taxonomy" id="226900"/>
    <lineage>
        <taxon>Bacteria</taxon>
        <taxon>Bacillati</taxon>
        <taxon>Bacillota</taxon>
        <taxon>Bacilli</taxon>
        <taxon>Bacillales</taxon>
        <taxon>Bacillaceae</taxon>
        <taxon>Bacillus</taxon>
        <taxon>Bacillus cereus group</taxon>
    </lineage>
</organism>
<accession>Q81H14</accession>
<name>Y1012_BACCR</name>
<reference key="1">
    <citation type="journal article" date="2003" name="Nature">
        <title>Genome sequence of Bacillus cereus and comparative analysis with Bacillus anthracis.</title>
        <authorList>
            <person name="Ivanova N."/>
            <person name="Sorokin A."/>
            <person name="Anderson I."/>
            <person name="Galleron N."/>
            <person name="Candelon B."/>
            <person name="Kapatral V."/>
            <person name="Bhattacharyya A."/>
            <person name="Reznik G."/>
            <person name="Mikhailova N."/>
            <person name="Lapidus A."/>
            <person name="Chu L."/>
            <person name="Mazur M."/>
            <person name="Goltsman E."/>
            <person name="Larsen N."/>
            <person name="D'Souza M."/>
            <person name="Walunas T."/>
            <person name="Grechkin Y."/>
            <person name="Pusch G."/>
            <person name="Haselkorn R."/>
            <person name="Fonstein M."/>
            <person name="Ehrlich S.D."/>
            <person name="Overbeek R."/>
            <person name="Kyrpides N.C."/>
        </authorList>
    </citation>
    <scope>NUCLEOTIDE SEQUENCE [LARGE SCALE GENOMIC DNA]</scope>
    <source>
        <strain>ATCC 14579 / DSM 31 / CCUG 7414 / JCM 2152 / NBRC 15305 / NCIMB 9373 / NCTC 2599 / NRRL B-3711</strain>
    </source>
</reference>
<proteinExistence type="evidence at protein level"/>
<dbReference type="EMBL" id="AE016877">
    <property type="protein sequence ID" value="AAP07999.1"/>
    <property type="molecule type" value="Genomic_DNA"/>
</dbReference>
<dbReference type="RefSeq" id="NP_830798.1">
    <property type="nucleotide sequence ID" value="NC_004722.1"/>
</dbReference>
<dbReference type="RefSeq" id="WP_000637511.1">
    <property type="nucleotide sequence ID" value="NZ_CP138336.1"/>
</dbReference>
<dbReference type="PDB" id="1VR4">
    <property type="method" value="X-ray"/>
    <property type="resolution" value="2.09 A"/>
    <property type="chains" value="A/B/C/D/E=1-103"/>
</dbReference>
<dbReference type="PDBsum" id="1VR4"/>
<dbReference type="SMR" id="Q81H14"/>
<dbReference type="STRING" id="226900.BC_1012"/>
<dbReference type="MetOSite" id="Q81H14"/>
<dbReference type="KEGG" id="bce:BC1012"/>
<dbReference type="PATRIC" id="fig|226900.8.peg.967"/>
<dbReference type="HOGENOM" id="CLU_117144_3_2_9"/>
<dbReference type="OrthoDB" id="9796448at2"/>
<dbReference type="EvolutionaryTrace" id="Q81H14"/>
<dbReference type="Proteomes" id="UP000001417">
    <property type="component" value="Chromosome"/>
</dbReference>
<dbReference type="Gene3D" id="3.30.110.70">
    <property type="entry name" value="Hypothetical protein apc22750. Chain B"/>
    <property type="match status" value="1"/>
</dbReference>
<dbReference type="HAMAP" id="MF_00338">
    <property type="entry name" value="UPF0145"/>
    <property type="match status" value="1"/>
</dbReference>
<dbReference type="InterPro" id="IPR035439">
    <property type="entry name" value="UPF0145_dom_sf"/>
</dbReference>
<dbReference type="InterPro" id="IPR002765">
    <property type="entry name" value="UPF0145_YbjQ-like"/>
</dbReference>
<dbReference type="NCBIfam" id="NF009495">
    <property type="entry name" value="PRK12855.1"/>
    <property type="match status" value="1"/>
</dbReference>
<dbReference type="NCBIfam" id="NF009496">
    <property type="entry name" value="PRK12856.1"/>
    <property type="match status" value="1"/>
</dbReference>
<dbReference type="PANTHER" id="PTHR34068">
    <property type="entry name" value="UPF0145 PROTEIN YBJQ"/>
    <property type="match status" value="1"/>
</dbReference>
<dbReference type="PANTHER" id="PTHR34068:SF1">
    <property type="entry name" value="UPF0145 PROTEIN YBJQ"/>
    <property type="match status" value="1"/>
</dbReference>
<dbReference type="Pfam" id="PF01906">
    <property type="entry name" value="YbjQ_1"/>
    <property type="match status" value="1"/>
</dbReference>
<dbReference type="SUPFAM" id="SSF117782">
    <property type="entry name" value="YbjQ-like"/>
    <property type="match status" value="1"/>
</dbReference>
<sequence length="103" mass="11035">MIVTTTSGIQGKEIIEYIDIVNGEAIMGANIVRDLFASVRDVVGGRAGSYESKLKEARDIAMDEMKELAKQKGANAIVGVDVDYEVVRDGMLMVAVSGTAVRI</sequence>
<comment type="similarity">
    <text evidence="1">Belongs to the UPF0145 family.</text>
</comment>
<gene>
    <name type="ordered locus">BC_1012</name>
</gene>
<evidence type="ECO:0000255" key="1">
    <source>
        <dbReference type="HAMAP-Rule" id="MF_00338"/>
    </source>
</evidence>
<evidence type="ECO:0007829" key="2">
    <source>
        <dbReference type="PDB" id="1VR4"/>
    </source>
</evidence>
<protein>
    <recommendedName>
        <fullName evidence="1">UPF0145 protein BC_1012</fullName>
    </recommendedName>
</protein>
<keyword id="KW-0002">3D-structure</keyword>
<keyword id="KW-1185">Reference proteome</keyword>